<reference key="1">
    <citation type="submission" date="2006-08" db="EMBL/GenBank/DDBJ databases">
        <title>Complete sequence of chromosome 1 of Burkholderia cepacia AMMD.</title>
        <authorList>
            <person name="Copeland A."/>
            <person name="Lucas S."/>
            <person name="Lapidus A."/>
            <person name="Barry K."/>
            <person name="Detter J.C."/>
            <person name="Glavina del Rio T."/>
            <person name="Hammon N."/>
            <person name="Israni S."/>
            <person name="Pitluck S."/>
            <person name="Bruce D."/>
            <person name="Chain P."/>
            <person name="Malfatti S."/>
            <person name="Shin M."/>
            <person name="Vergez L."/>
            <person name="Schmutz J."/>
            <person name="Larimer F."/>
            <person name="Land M."/>
            <person name="Hauser L."/>
            <person name="Kyrpides N."/>
            <person name="Kim E."/>
            <person name="Parke J."/>
            <person name="Coenye T."/>
            <person name="Konstantinidis K."/>
            <person name="Ramette A."/>
            <person name="Tiedje J."/>
            <person name="Richardson P."/>
        </authorList>
    </citation>
    <scope>NUCLEOTIDE SEQUENCE [LARGE SCALE GENOMIC DNA]</scope>
    <source>
        <strain>ATCC BAA-244 / DSM 16087 / CCUG 44356 / LMG 19182 / AMMD</strain>
    </source>
</reference>
<sequence length="427" mass="44959">MSNNQILFERAQKTIPGGVNSPVRAFRSVGGTPRFVSRAQGPYFWDADGKQYIDYIGSWGPMIVGHVHPEVLSAVQNVLADGFSFGAPTEAEIEIAEEICKLVPSIEQVRMVSSGTEATMSALRLARGFTGRSRIVKFEGCYHGHADSLLVKAGSGLLTFGNPTSAGVPADIAKHTTVLEYNNVAALEEAFGAFGDEIAAVIVEPVAGNMNLVRGTPEFLNALRALCTKHGAVLIFDEVMCGFRVALGGAQQHYGITADLTCLGKVIGGGMPAAAFGGRRDIMAHLAPLGGVYQAGTLSGNPIAVAAGLKTLQLIQAPGFYDALTAQTKRLADGLAAEARAAGVPFAADSIGAMFGLYFAERVPTSFAEVTKSDTERFNRFFHLMLDEGVYFAPSAYEAGFVSSTHDDAVIDATLAAARRAFAALAA</sequence>
<gene>
    <name evidence="1" type="primary">hemL</name>
    <name type="ordered locus">Bamb_0822</name>
</gene>
<comment type="catalytic activity">
    <reaction evidence="1">
        <text>(S)-4-amino-5-oxopentanoate = 5-aminolevulinate</text>
        <dbReference type="Rhea" id="RHEA:14265"/>
        <dbReference type="ChEBI" id="CHEBI:57501"/>
        <dbReference type="ChEBI" id="CHEBI:356416"/>
        <dbReference type="EC" id="5.4.3.8"/>
    </reaction>
</comment>
<comment type="cofactor">
    <cofactor evidence="1">
        <name>pyridoxal 5'-phosphate</name>
        <dbReference type="ChEBI" id="CHEBI:597326"/>
    </cofactor>
</comment>
<comment type="pathway">
    <text evidence="1">Porphyrin-containing compound metabolism; protoporphyrin-IX biosynthesis; 5-aminolevulinate from L-glutamyl-tRNA(Glu): step 2/2.</text>
</comment>
<comment type="subunit">
    <text evidence="1">Homodimer.</text>
</comment>
<comment type="subcellular location">
    <subcellularLocation>
        <location evidence="1">Cytoplasm</location>
    </subcellularLocation>
</comment>
<comment type="similarity">
    <text evidence="1">Belongs to the class-III pyridoxal-phosphate-dependent aminotransferase family. HemL subfamily.</text>
</comment>
<evidence type="ECO:0000255" key="1">
    <source>
        <dbReference type="HAMAP-Rule" id="MF_00375"/>
    </source>
</evidence>
<accession>Q0BHJ2</accession>
<organism>
    <name type="scientific">Burkholderia ambifaria (strain ATCC BAA-244 / DSM 16087 / CCUG 44356 / LMG 19182 / AMMD)</name>
    <name type="common">Burkholderia cepacia (strain AMMD)</name>
    <dbReference type="NCBI Taxonomy" id="339670"/>
    <lineage>
        <taxon>Bacteria</taxon>
        <taxon>Pseudomonadati</taxon>
        <taxon>Pseudomonadota</taxon>
        <taxon>Betaproteobacteria</taxon>
        <taxon>Burkholderiales</taxon>
        <taxon>Burkholderiaceae</taxon>
        <taxon>Burkholderia</taxon>
        <taxon>Burkholderia cepacia complex</taxon>
    </lineage>
</organism>
<name>GSA_BURCM</name>
<dbReference type="EC" id="5.4.3.8" evidence="1"/>
<dbReference type="EMBL" id="CP000440">
    <property type="protein sequence ID" value="ABI86381.1"/>
    <property type="molecule type" value="Genomic_DNA"/>
</dbReference>
<dbReference type="RefSeq" id="WP_011656193.1">
    <property type="nucleotide sequence ID" value="NZ_CP009798.1"/>
</dbReference>
<dbReference type="SMR" id="Q0BHJ2"/>
<dbReference type="GeneID" id="93083771"/>
<dbReference type="KEGG" id="bam:Bamb_0822"/>
<dbReference type="PATRIC" id="fig|339670.21.peg.763"/>
<dbReference type="eggNOG" id="COG0001">
    <property type="taxonomic scope" value="Bacteria"/>
</dbReference>
<dbReference type="UniPathway" id="UPA00251">
    <property type="reaction ID" value="UER00317"/>
</dbReference>
<dbReference type="Proteomes" id="UP000000662">
    <property type="component" value="Chromosome 1"/>
</dbReference>
<dbReference type="GO" id="GO:0005737">
    <property type="term" value="C:cytoplasm"/>
    <property type="evidence" value="ECO:0007669"/>
    <property type="project" value="UniProtKB-SubCell"/>
</dbReference>
<dbReference type="GO" id="GO:0042286">
    <property type="term" value="F:glutamate-1-semialdehyde 2,1-aminomutase activity"/>
    <property type="evidence" value="ECO:0007669"/>
    <property type="project" value="UniProtKB-UniRule"/>
</dbReference>
<dbReference type="GO" id="GO:0030170">
    <property type="term" value="F:pyridoxal phosphate binding"/>
    <property type="evidence" value="ECO:0007669"/>
    <property type="project" value="InterPro"/>
</dbReference>
<dbReference type="GO" id="GO:0008483">
    <property type="term" value="F:transaminase activity"/>
    <property type="evidence" value="ECO:0007669"/>
    <property type="project" value="InterPro"/>
</dbReference>
<dbReference type="GO" id="GO:0006782">
    <property type="term" value="P:protoporphyrinogen IX biosynthetic process"/>
    <property type="evidence" value="ECO:0007669"/>
    <property type="project" value="UniProtKB-UniRule"/>
</dbReference>
<dbReference type="CDD" id="cd00610">
    <property type="entry name" value="OAT_like"/>
    <property type="match status" value="1"/>
</dbReference>
<dbReference type="FunFam" id="3.40.640.10:FF:000021">
    <property type="entry name" value="Glutamate-1-semialdehyde 2,1-aminomutase"/>
    <property type="match status" value="1"/>
</dbReference>
<dbReference type="Gene3D" id="3.90.1150.10">
    <property type="entry name" value="Aspartate Aminotransferase, domain 1"/>
    <property type="match status" value="1"/>
</dbReference>
<dbReference type="Gene3D" id="3.40.640.10">
    <property type="entry name" value="Type I PLP-dependent aspartate aminotransferase-like (Major domain)"/>
    <property type="match status" value="1"/>
</dbReference>
<dbReference type="HAMAP" id="MF_00375">
    <property type="entry name" value="HemL_aminotrans_3"/>
    <property type="match status" value="1"/>
</dbReference>
<dbReference type="InterPro" id="IPR004639">
    <property type="entry name" value="4pyrrol_synth_GluAld_NH2Trfase"/>
</dbReference>
<dbReference type="InterPro" id="IPR005814">
    <property type="entry name" value="Aminotrans_3"/>
</dbReference>
<dbReference type="InterPro" id="IPR049704">
    <property type="entry name" value="Aminotrans_3_PPA_site"/>
</dbReference>
<dbReference type="InterPro" id="IPR015424">
    <property type="entry name" value="PyrdxlP-dep_Trfase"/>
</dbReference>
<dbReference type="InterPro" id="IPR015421">
    <property type="entry name" value="PyrdxlP-dep_Trfase_major"/>
</dbReference>
<dbReference type="InterPro" id="IPR015422">
    <property type="entry name" value="PyrdxlP-dep_Trfase_small"/>
</dbReference>
<dbReference type="NCBIfam" id="TIGR00713">
    <property type="entry name" value="hemL"/>
    <property type="match status" value="1"/>
</dbReference>
<dbReference type="NCBIfam" id="NF000818">
    <property type="entry name" value="PRK00062.1"/>
    <property type="match status" value="1"/>
</dbReference>
<dbReference type="PANTHER" id="PTHR43713">
    <property type="entry name" value="GLUTAMATE-1-SEMIALDEHYDE 2,1-AMINOMUTASE"/>
    <property type="match status" value="1"/>
</dbReference>
<dbReference type="PANTHER" id="PTHR43713:SF3">
    <property type="entry name" value="GLUTAMATE-1-SEMIALDEHYDE 2,1-AMINOMUTASE 1, CHLOROPLASTIC-RELATED"/>
    <property type="match status" value="1"/>
</dbReference>
<dbReference type="Pfam" id="PF00202">
    <property type="entry name" value="Aminotran_3"/>
    <property type="match status" value="1"/>
</dbReference>
<dbReference type="SUPFAM" id="SSF53383">
    <property type="entry name" value="PLP-dependent transferases"/>
    <property type="match status" value="1"/>
</dbReference>
<dbReference type="PROSITE" id="PS00600">
    <property type="entry name" value="AA_TRANSFER_CLASS_3"/>
    <property type="match status" value="1"/>
</dbReference>
<keyword id="KW-0963">Cytoplasm</keyword>
<keyword id="KW-0413">Isomerase</keyword>
<keyword id="KW-0627">Porphyrin biosynthesis</keyword>
<keyword id="KW-0663">Pyridoxal phosphate</keyword>
<feature type="chain" id="PRO_0000300896" description="Glutamate-1-semialdehyde 2,1-aminomutase">
    <location>
        <begin position="1"/>
        <end position="427"/>
    </location>
</feature>
<feature type="modified residue" description="N6-(pyridoxal phosphate)lysine" evidence="1">
    <location>
        <position position="265"/>
    </location>
</feature>
<protein>
    <recommendedName>
        <fullName evidence="1">Glutamate-1-semialdehyde 2,1-aminomutase</fullName>
        <shortName evidence="1">GSA</shortName>
        <ecNumber evidence="1">5.4.3.8</ecNumber>
    </recommendedName>
    <alternativeName>
        <fullName evidence="1">Glutamate-1-semialdehyde aminotransferase</fullName>
        <shortName evidence="1">GSA-AT</shortName>
    </alternativeName>
</protein>
<proteinExistence type="inferred from homology"/>